<reference key="1">
    <citation type="journal article" date="2002" name="Nature">
        <title>The genome sequence of Schizosaccharomyces pombe.</title>
        <authorList>
            <person name="Wood V."/>
            <person name="Gwilliam R."/>
            <person name="Rajandream M.A."/>
            <person name="Lyne M.H."/>
            <person name="Lyne R."/>
            <person name="Stewart A."/>
            <person name="Sgouros J.G."/>
            <person name="Peat N."/>
            <person name="Hayles J."/>
            <person name="Baker S.G."/>
            <person name="Basham D."/>
            <person name="Bowman S."/>
            <person name="Brooks K."/>
            <person name="Brown D."/>
            <person name="Brown S."/>
            <person name="Chillingworth T."/>
            <person name="Churcher C.M."/>
            <person name="Collins M."/>
            <person name="Connor R."/>
            <person name="Cronin A."/>
            <person name="Davis P."/>
            <person name="Feltwell T."/>
            <person name="Fraser A."/>
            <person name="Gentles S."/>
            <person name="Goble A."/>
            <person name="Hamlin N."/>
            <person name="Harris D.E."/>
            <person name="Hidalgo J."/>
            <person name="Hodgson G."/>
            <person name="Holroyd S."/>
            <person name="Hornsby T."/>
            <person name="Howarth S."/>
            <person name="Huckle E.J."/>
            <person name="Hunt S."/>
            <person name="Jagels K."/>
            <person name="James K.D."/>
            <person name="Jones L."/>
            <person name="Jones M."/>
            <person name="Leather S."/>
            <person name="McDonald S."/>
            <person name="McLean J."/>
            <person name="Mooney P."/>
            <person name="Moule S."/>
            <person name="Mungall K.L."/>
            <person name="Murphy L.D."/>
            <person name="Niblett D."/>
            <person name="Odell C."/>
            <person name="Oliver K."/>
            <person name="O'Neil S."/>
            <person name="Pearson D."/>
            <person name="Quail M.A."/>
            <person name="Rabbinowitsch E."/>
            <person name="Rutherford K.M."/>
            <person name="Rutter S."/>
            <person name="Saunders D."/>
            <person name="Seeger K."/>
            <person name="Sharp S."/>
            <person name="Skelton J."/>
            <person name="Simmonds M.N."/>
            <person name="Squares R."/>
            <person name="Squares S."/>
            <person name="Stevens K."/>
            <person name="Taylor K."/>
            <person name="Taylor R.G."/>
            <person name="Tivey A."/>
            <person name="Walsh S.V."/>
            <person name="Warren T."/>
            <person name="Whitehead S."/>
            <person name="Woodward J.R."/>
            <person name="Volckaert G."/>
            <person name="Aert R."/>
            <person name="Robben J."/>
            <person name="Grymonprez B."/>
            <person name="Weltjens I."/>
            <person name="Vanstreels E."/>
            <person name="Rieger M."/>
            <person name="Schaefer M."/>
            <person name="Mueller-Auer S."/>
            <person name="Gabel C."/>
            <person name="Fuchs M."/>
            <person name="Duesterhoeft A."/>
            <person name="Fritzc C."/>
            <person name="Holzer E."/>
            <person name="Moestl D."/>
            <person name="Hilbert H."/>
            <person name="Borzym K."/>
            <person name="Langer I."/>
            <person name="Beck A."/>
            <person name="Lehrach H."/>
            <person name="Reinhardt R."/>
            <person name="Pohl T.M."/>
            <person name="Eger P."/>
            <person name="Zimmermann W."/>
            <person name="Wedler H."/>
            <person name="Wambutt R."/>
            <person name="Purnelle B."/>
            <person name="Goffeau A."/>
            <person name="Cadieu E."/>
            <person name="Dreano S."/>
            <person name="Gloux S."/>
            <person name="Lelaure V."/>
            <person name="Mottier S."/>
            <person name="Galibert F."/>
            <person name="Aves S.J."/>
            <person name="Xiang Z."/>
            <person name="Hunt C."/>
            <person name="Moore K."/>
            <person name="Hurst S.M."/>
            <person name="Lucas M."/>
            <person name="Rochet M."/>
            <person name="Gaillardin C."/>
            <person name="Tallada V.A."/>
            <person name="Garzon A."/>
            <person name="Thode G."/>
            <person name="Daga R.R."/>
            <person name="Cruzado L."/>
            <person name="Jimenez J."/>
            <person name="Sanchez M."/>
            <person name="del Rey F."/>
            <person name="Benito J."/>
            <person name="Dominguez A."/>
            <person name="Revuelta J.L."/>
            <person name="Moreno S."/>
            <person name="Armstrong J."/>
            <person name="Forsburg S.L."/>
            <person name="Cerutti L."/>
            <person name="Lowe T."/>
            <person name="McCombie W.R."/>
            <person name="Paulsen I."/>
            <person name="Potashkin J."/>
            <person name="Shpakovski G.V."/>
            <person name="Ussery D."/>
            <person name="Barrell B.G."/>
            <person name="Nurse P."/>
        </authorList>
    </citation>
    <scope>NUCLEOTIDE SEQUENCE [LARGE SCALE GENOMIC DNA]</scope>
    <source>
        <strain>972 / ATCC 24843</strain>
    </source>
</reference>
<proteinExistence type="inferred from homology"/>
<sequence>MEAAPSEKVPAKKLSSSENLDIGVSEVVTVDAAENNSNGIKRGLKTRHVSMMALAGIIGPGVFIGMGSALHIGGPVGLIVGFAIVSIVVFGVMLSIGEFNSLFDFNFNTHAARWVDPAFGAAIGWNYVIVWLTNIAAEYTSLTSILQYWGPHVPSYGFFLIFWGFFTCYQMLGVSVFGESEYILAFIKLLFITGFYIFAIIYAAGGIPHHKPPNLFKEMPLAHGFGGIVSAFVYAGVFFSGVESVSMTAAESKNPKKAIPLAVRQTFWRILYVYFGISISYGITVAWNDPNLSSGSKTLKSPMTIAIMNAGWNHAGDFVNAVILITCLSSINSGIYIGSRSLYNLAKDGMAPKIFKRVDKRGVPWVAVHSVHLFGFLSIMNYSTGAVKAYGYIINLAGVSAFIVWTAIIFVHFRFRRGWVKQGYALSDLPFKSPLYPFPQLIGFVIGIILTLVQGWTVFKPFAAGDFVDAYILLPLFFVIWLSYKFIKKTKWVSYEDMDFINGRRVIEPTYSNEQSSDKETEDGKKTSFWNRVWKEV</sequence>
<name>YCUB_SCHPO</name>
<keyword id="KW-0029">Amino-acid transport</keyword>
<keyword id="KW-0472">Membrane</keyword>
<keyword id="KW-1185">Reference proteome</keyword>
<keyword id="KW-0812">Transmembrane</keyword>
<keyword id="KW-1133">Transmembrane helix</keyword>
<keyword id="KW-0813">Transport</keyword>
<protein>
    <recommendedName>
        <fullName>Uncharacterized amino-acid permease C965.11c</fullName>
    </recommendedName>
</protein>
<comment type="subcellular location">
    <subcellularLocation>
        <location evidence="2">Membrane</location>
        <topology evidence="2">Multi-pass membrane protein</topology>
    </subcellularLocation>
</comment>
<comment type="similarity">
    <text evidence="2">Belongs to the amino acid-polyamine-organocation (APC) superfamily.</text>
</comment>
<evidence type="ECO:0000255" key="1"/>
<evidence type="ECO:0000305" key="2"/>
<dbReference type="EMBL" id="CU329672">
    <property type="protein sequence ID" value="CAA19071.1"/>
    <property type="molecule type" value="Genomic_DNA"/>
</dbReference>
<dbReference type="PIR" id="T41664">
    <property type="entry name" value="T41664"/>
</dbReference>
<dbReference type="SMR" id="O59831"/>
<dbReference type="BioGRID" id="275744">
    <property type="interactions" value="2"/>
</dbReference>
<dbReference type="FunCoup" id="O59831">
    <property type="interactions" value="206"/>
</dbReference>
<dbReference type="STRING" id="284812.O59831"/>
<dbReference type="iPTMnet" id="O59831"/>
<dbReference type="PaxDb" id="4896-SPCC965.11c.1"/>
<dbReference type="EnsemblFungi" id="SPCC965.11c.1">
    <property type="protein sequence ID" value="SPCC965.11c.1:pep"/>
    <property type="gene ID" value="SPCC965.11c"/>
</dbReference>
<dbReference type="KEGG" id="spo:2539173"/>
<dbReference type="PomBase" id="SPCC965.11c"/>
<dbReference type="VEuPathDB" id="FungiDB:SPCC965.11c"/>
<dbReference type="eggNOG" id="KOG1286">
    <property type="taxonomic scope" value="Eukaryota"/>
</dbReference>
<dbReference type="HOGENOM" id="CLU_007946_12_2_1"/>
<dbReference type="InParanoid" id="O59831"/>
<dbReference type="OMA" id="FIVWTGI"/>
<dbReference type="PhylomeDB" id="O59831"/>
<dbReference type="PRO" id="PR:O59831"/>
<dbReference type="Proteomes" id="UP000002485">
    <property type="component" value="Chromosome III"/>
</dbReference>
<dbReference type="GO" id="GO:0005794">
    <property type="term" value="C:Golgi apparatus"/>
    <property type="evidence" value="ECO:0007005"/>
    <property type="project" value="PomBase"/>
</dbReference>
<dbReference type="GO" id="GO:0016020">
    <property type="term" value="C:membrane"/>
    <property type="evidence" value="ECO:0000318"/>
    <property type="project" value="GO_Central"/>
</dbReference>
<dbReference type="GO" id="GO:0005886">
    <property type="term" value="C:plasma membrane"/>
    <property type="evidence" value="ECO:0000266"/>
    <property type="project" value="PomBase"/>
</dbReference>
<dbReference type="GO" id="GO:0015171">
    <property type="term" value="F:amino acid transmembrane transporter activity"/>
    <property type="evidence" value="ECO:0000318"/>
    <property type="project" value="GO_Central"/>
</dbReference>
<dbReference type="GO" id="GO:0015190">
    <property type="term" value="F:L-leucine transmembrane transporter activity"/>
    <property type="evidence" value="ECO:0000315"/>
    <property type="project" value="PomBase"/>
</dbReference>
<dbReference type="GO" id="GO:0003333">
    <property type="term" value="P:amino acid transmembrane transport"/>
    <property type="evidence" value="ECO:0000318"/>
    <property type="project" value="GO_Central"/>
</dbReference>
<dbReference type="GO" id="GO:1903801">
    <property type="term" value="P:L-leucine import across plasma membrane"/>
    <property type="evidence" value="ECO:0000315"/>
    <property type="project" value="PomBase"/>
</dbReference>
<dbReference type="FunFam" id="1.20.1740.10:FF:000001">
    <property type="entry name" value="Amino acid permease"/>
    <property type="match status" value="1"/>
</dbReference>
<dbReference type="Gene3D" id="1.20.1740.10">
    <property type="entry name" value="Amino acid/polyamine transporter I"/>
    <property type="match status" value="1"/>
</dbReference>
<dbReference type="InterPro" id="IPR004841">
    <property type="entry name" value="AA-permease/SLC12A_dom"/>
</dbReference>
<dbReference type="InterPro" id="IPR050524">
    <property type="entry name" value="APC_YAT"/>
</dbReference>
<dbReference type="PANTHER" id="PTHR43341">
    <property type="entry name" value="AMINO ACID PERMEASE"/>
    <property type="match status" value="1"/>
</dbReference>
<dbReference type="PANTHER" id="PTHR43341:SF26">
    <property type="entry name" value="GENERAL AMINO ACID PERMEASE AGP3"/>
    <property type="match status" value="1"/>
</dbReference>
<dbReference type="Pfam" id="PF00324">
    <property type="entry name" value="AA_permease"/>
    <property type="match status" value="1"/>
</dbReference>
<dbReference type="PIRSF" id="PIRSF006060">
    <property type="entry name" value="AA_transporter"/>
    <property type="match status" value="1"/>
</dbReference>
<accession>O59831</accession>
<feature type="chain" id="PRO_0000054178" description="Uncharacterized amino-acid permease C965.11c">
    <location>
        <begin position="1"/>
        <end position="537"/>
    </location>
</feature>
<feature type="transmembrane region" description="Helical" evidence="1">
    <location>
        <begin position="52"/>
        <end position="72"/>
    </location>
</feature>
<feature type="transmembrane region" description="Helical" evidence="1">
    <location>
        <begin position="76"/>
        <end position="96"/>
    </location>
</feature>
<feature type="transmembrane region" description="Helical" evidence="1">
    <location>
        <begin position="157"/>
        <end position="177"/>
    </location>
</feature>
<feature type="transmembrane region" description="Helical" evidence="1">
    <location>
        <begin position="183"/>
        <end position="203"/>
    </location>
</feature>
<feature type="transmembrane region" description="Helical" evidence="1">
    <location>
        <begin position="219"/>
        <end position="239"/>
    </location>
</feature>
<feature type="transmembrane region" description="Helical" evidence="1">
    <location>
        <begin position="267"/>
        <end position="287"/>
    </location>
</feature>
<feature type="transmembrane region" description="Helical" evidence="1">
    <location>
        <begin position="318"/>
        <end position="338"/>
    </location>
</feature>
<feature type="transmembrane region" description="Helical" evidence="1">
    <location>
        <begin position="362"/>
        <end position="382"/>
    </location>
</feature>
<feature type="transmembrane region" description="Helical" evidence="1">
    <location>
        <begin position="393"/>
        <end position="413"/>
    </location>
</feature>
<feature type="transmembrane region" description="Helical" evidence="1">
    <location>
        <begin position="462"/>
        <end position="482"/>
    </location>
</feature>
<organism>
    <name type="scientific">Schizosaccharomyces pombe (strain 972 / ATCC 24843)</name>
    <name type="common">Fission yeast</name>
    <dbReference type="NCBI Taxonomy" id="284812"/>
    <lineage>
        <taxon>Eukaryota</taxon>
        <taxon>Fungi</taxon>
        <taxon>Dikarya</taxon>
        <taxon>Ascomycota</taxon>
        <taxon>Taphrinomycotina</taxon>
        <taxon>Schizosaccharomycetes</taxon>
        <taxon>Schizosaccharomycetales</taxon>
        <taxon>Schizosaccharomycetaceae</taxon>
        <taxon>Schizosaccharomyces</taxon>
    </lineage>
</organism>
<gene>
    <name type="ORF">SPCC965.11c</name>
</gene>